<reference key="1">
    <citation type="journal article" date="2006" name="J. Bacteriol.">
        <title>Complete genome sequence of Yersinia pestis strains Antiqua and Nepal516: evidence of gene reduction in an emerging pathogen.</title>
        <authorList>
            <person name="Chain P.S.G."/>
            <person name="Hu P."/>
            <person name="Malfatti S.A."/>
            <person name="Radnedge L."/>
            <person name="Larimer F."/>
            <person name="Vergez L.M."/>
            <person name="Worsham P."/>
            <person name="Chu M.C."/>
            <person name="Andersen G.L."/>
        </authorList>
    </citation>
    <scope>NUCLEOTIDE SEQUENCE [LARGE SCALE GENOMIC DNA]</scope>
    <source>
        <strain>Antiqua</strain>
    </source>
</reference>
<dbReference type="EC" id="5.3.1.9" evidence="1"/>
<dbReference type="EMBL" id="CP000308">
    <property type="protein sequence ID" value="ABG11995.1"/>
    <property type="molecule type" value="Genomic_DNA"/>
</dbReference>
<dbReference type="RefSeq" id="WP_002212085.1">
    <property type="nucleotide sequence ID" value="NZ_CP009906.1"/>
</dbReference>
<dbReference type="SMR" id="Q1CC27"/>
<dbReference type="GeneID" id="57975003"/>
<dbReference type="KEGG" id="ypa:YPA_0026"/>
<dbReference type="UniPathway" id="UPA00109">
    <property type="reaction ID" value="UER00181"/>
</dbReference>
<dbReference type="UniPathway" id="UPA00138"/>
<dbReference type="Proteomes" id="UP000001971">
    <property type="component" value="Chromosome"/>
</dbReference>
<dbReference type="GO" id="GO:0005829">
    <property type="term" value="C:cytosol"/>
    <property type="evidence" value="ECO:0007669"/>
    <property type="project" value="TreeGrafter"/>
</dbReference>
<dbReference type="GO" id="GO:0097367">
    <property type="term" value="F:carbohydrate derivative binding"/>
    <property type="evidence" value="ECO:0007669"/>
    <property type="project" value="InterPro"/>
</dbReference>
<dbReference type="GO" id="GO:0004347">
    <property type="term" value="F:glucose-6-phosphate isomerase activity"/>
    <property type="evidence" value="ECO:0007669"/>
    <property type="project" value="UniProtKB-UniRule"/>
</dbReference>
<dbReference type="GO" id="GO:0048029">
    <property type="term" value="F:monosaccharide binding"/>
    <property type="evidence" value="ECO:0007669"/>
    <property type="project" value="TreeGrafter"/>
</dbReference>
<dbReference type="GO" id="GO:0006094">
    <property type="term" value="P:gluconeogenesis"/>
    <property type="evidence" value="ECO:0007669"/>
    <property type="project" value="UniProtKB-UniRule"/>
</dbReference>
<dbReference type="GO" id="GO:0051156">
    <property type="term" value="P:glucose 6-phosphate metabolic process"/>
    <property type="evidence" value="ECO:0007669"/>
    <property type="project" value="TreeGrafter"/>
</dbReference>
<dbReference type="GO" id="GO:0006096">
    <property type="term" value="P:glycolytic process"/>
    <property type="evidence" value="ECO:0007669"/>
    <property type="project" value="UniProtKB-UniRule"/>
</dbReference>
<dbReference type="CDD" id="cd05015">
    <property type="entry name" value="SIS_PGI_1"/>
    <property type="match status" value="1"/>
</dbReference>
<dbReference type="CDD" id="cd05016">
    <property type="entry name" value="SIS_PGI_2"/>
    <property type="match status" value="1"/>
</dbReference>
<dbReference type="FunFam" id="1.10.1390.10:FF:000001">
    <property type="entry name" value="Glucose-6-phosphate isomerase"/>
    <property type="match status" value="1"/>
</dbReference>
<dbReference type="FunFam" id="3.40.50.10490:FF:000004">
    <property type="entry name" value="Glucose-6-phosphate isomerase"/>
    <property type="match status" value="1"/>
</dbReference>
<dbReference type="Gene3D" id="1.10.1390.10">
    <property type="match status" value="1"/>
</dbReference>
<dbReference type="Gene3D" id="3.40.50.10490">
    <property type="entry name" value="Glucose-6-phosphate isomerase like protein, domain 1"/>
    <property type="match status" value="2"/>
</dbReference>
<dbReference type="HAMAP" id="MF_00473">
    <property type="entry name" value="G6P_isomerase"/>
    <property type="match status" value="1"/>
</dbReference>
<dbReference type="InterPro" id="IPR001672">
    <property type="entry name" value="G6P_Isomerase"/>
</dbReference>
<dbReference type="InterPro" id="IPR023096">
    <property type="entry name" value="G6P_Isomerase_C"/>
</dbReference>
<dbReference type="InterPro" id="IPR018189">
    <property type="entry name" value="Phosphoglucose_isomerase_CS"/>
</dbReference>
<dbReference type="InterPro" id="IPR046348">
    <property type="entry name" value="SIS_dom_sf"/>
</dbReference>
<dbReference type="InterPro" id="IPR035476">
    <property type="entry name" value="SIS_PGI_1"/>
</dbReference>
<dbReference type="InterPro" id="IPR035482">
    <property type="entry name" value="SIS_PGI_2"/>
</dbReference>
<dbReference type="NCBIfam" id="NF001211">
    <property type="entry name" value="PRK00179.1"/>
    <property type="match status" value="1"/>
</dbReference>
<dbReference type="PANTHER" id="PTHR11469">
    <property type="entry name" value="GLUCOSE-6-PHOSPHATE ISOMERASE"/>
    <property type="match status" value="1"/>
</dbReference>
<dbReference type="PANTHER" id="PTHR11469:SF1">
    <property type="entry name" value="GLUCOSE-6-PHOSPHATE ISOMERASE"/>
    <property type="match status" value="1"/>
</dbReference>
<dbReference type="Pfam" id="PF00342">
    <property type="entry name" value="PGI"/>
    <property type="match status" value="1"/>
</dbReference>
<dbReference type="PRINTS" id="PR00662">
    <property type="entry name" value="G6PISOMERASE"/>
</dbReference>
<dbReference type="SUPFAM" id="SSF53697">
    <property type="entry name" value="SIS domain"/>
    <property type="match status" value="1"/>
</dbReference>
<dbReference type="PROSITE" id="PS00765">
    <property type="entry name" value="P_GLUCOSE_ISOMERASE_1"/>
    <property type="match status" value="1"/>
</dbReference>
<dbReference type="PROSITE" id="PS00174">
    <property type="entry name" value="P_GLUCOSE_ISOMERASE_2"/>
    <property type="match status" value="1"/>
</dbReference>
<dbReference type="PROSITE" id="PS51463">
    <property type="entry name" value="P_GLUCOSE_ISOMERASE_3"/>
    <property type="match status" value="1"/>
</dbReference>
<accession>Q1CC27</accession>
<name>G6PI_YERPA</name>
<keyword id="KW-0963">Cytoplasm</keyword>
<keyword id="KW-0312">Gluconeogenesis</keyword>
<keyword id="KW-0324">Glycolysis</keyword>
<keyword id="KW-0413">Isomerase</keyword>
<evidence type="ECO:0000255" key="1">
    <source>
        <dbReference type="HAMAP-Rule" id="MF_00473"/>
    </source>
</evidence>
<sequence length="548" mass="61161">MKNINPSQTAAWKALQQHFEQMKDVTISSLFAKDDQRFNRFSATFDDQMLVDFSKNRITSETLEKLQDLAKETDLAGAIKSMFSGEKINRTEDRAVLHIALRNRSNTPIVVDGKDVMPEVNAVLAKMKQFCDRVISGDWKGYTGKAITDVVNIGIGGSDLGPYMVTEALRPYKNHLNMHFVSNVDGTHIAEALKPLNPETTLFLVASKTFTTQETMTNAHSARDWFLSAAGDPAHVAKHFAALSTNAKAVGEFGIDTNNMFEFWDWVGGRYSLWSAIGLSIALSVGFEHFEQLLSGAHAMDKHFAETPAEKNLPVLLALIGIWYNNFFGAETEAILPYDQYMHRFPAYFQQGNMESNGKYVDRNGHPVDYQTGPIIWGEPGTNGQHAFYQLIHQGTKLIPCDFIAPAISHNPLSDHHAKLLSNFFAQTEALAFGKSLEDVEAEFAAAGKTPEQVAHVAPFKVFEGNRPTNSILLREITPFSLGALIALYEHKIFTQGVILNIYTFDQWGVELGKQLANRILPELADDQEVTSHDSSTNALINRFKNWR</sequence>
<organism>
    <name type="scientific">Yersinia pestis bv. Antiqua (strain Antiqua)</name>
    <dbReference type="NCBI Taxonomy" id="360102"/>
    <lineage>
        <taxon>Bacteria</taxon>
        <taxon>Pseudomonadati</taxon>
        <taxon>Pseudomonadota</taxon>
        <taxon>Gammaproteobacteria</taxon>
        <taxon>Enterobacterales</taxon>
        <taxon>Yersiniaceae</taxon>
        <taxon>Yersinia</taxon>
    </lineage>
</organism>
<proteinExistence type="inferred from homology"/>
<protein>
    <recommendedName>
        <fullName evidence="1">Glucose-6-phosphate isomerase</fullName>
        <shortName evidence="1">GPI</shortName>
        <ecNumber evidence="1">5.3.1.9</ecNumber>
    </recommendedName>
    <alternativeName>
        <fullName evidence="1">Phosphoglucose isomerase</fullName>
        <shortName evidence="1">PGI</shortName>
    </alternativeName>
    <alternativeName>
        <fullName evidence="1">Phosphohexose isomerase</fullName>
        <shortName evidence="1">PHI</shortName>
    </alternativeName>
</protein>
<feature type="chain" id="PRO_1000014032" description="Glucose-6-phosphate isomerase">
    <location>
        <begin position="1"/>
        <end position="548"/>
    </location>
</feature>
<feature type="active site" description="Proton donor" evidence="1">
    <location>
        <position position="355"/>
    </location>
</feature>
<feature type="active site" evidence="1">
    <location>
        <position position="386"/>
    </location>
</feature>
<feature type="active site" evidence="1">
    <location>
        <position position="514"/>
    </location>
</feature>
<gene>
    <name evidence="1" type="primary">pgi</name>
    <name type="ordered locus">YPA_0026</name>
</gene>
<comment type="function">
    <text evidence="1">Catalyzes the reversible isomerization of glucose-6-phosphate to fructose-6-phosphate.</text>
</comment>
<comment type="catalytic activity">
    <reaction evidence="1">
        <text>alpha-D-glucose 6-phosphate = beta-D-fructose 6-phosphate</text>
        <dbReference type="Rhea" id="RHEA:11816"/>
        <dbReference type="ChEBI" id="CHEBI:57634"/>
        <dbReference type="ChEBI" id="CHEBI:58225"/>
        <dbReference type="EC" id="5.3.1.9"/>
    </reaction>
</comment>
<comment type="pathway">
    <text evidence="1">Carbohydrate biosynthesis; gluconeogenesis.</text>
</comment>
<comment type="pathway">
    <text evidence="1">Carbohydrate degradation; glycolysis; D-glyceraldehyde 3-phosphate and glycerone phosphate from D-glucose: step 2/4.</text>
</comment>
<comment type="subcellular location">
    <subcellularLocation>
        <location evidence="1">Cytoplasm</location>
    </subcellularLocation>
</comment>
<comment type="similarity">
    <text evidence="1">Belongs to the GPI family.</text>
</comment>